<sequence>MEEKIILSIQNPEDVLISYVDIYLGDKNVSLEVLSKDTAKINLPFDKDEGEGEIVVKIKYKTLPHYKNNNNKKEVKKQDYKNLTQTLNEITKKTTNRKDNDIIIADSKPVSLDGLKKEEKKKKLNDIIIV</sequence>
<accession>Q57835</accession>
<protein>
    <recommendedName>
        <fullName>Uncharacterized protein MJ0390</fullName>
    </recommendedName>
</protein>
<reference key="1">
    <citation type="journal article" date="1996" name="Science">
        <title>Complete genome sequence of the methanogenic archaeon, Methanococcus jannaschii.</title>
        <authorList>
            <person name="Bult C.J."/>
            <person name="White O."/>
            <person name="Olsen G.J."/>
            <person name="Zhou L."/>
            <person name="Fleischmann R.D."/>
            <person name="Sutton G.G."/>
            <person name="Blake J.A."/>
            <person name="FitzGerald L.M."/>
            <person name="Clayton R.A."/>
            <person name="Gocayne J.D."/>
            <person name="Kerlavage A.R."/>
            <person name="Dougherty B.A."/>
            <person name="Tomb J.-F."/>
            <person name="Adams M.D."/>
            <person name="Reich C.I."/>
            <person name="Overbeek R."/>
            <person name="Kirkness E.F."/>
            <person name="Weinstock K.G."/>
            <person name="Merrick J.M."/>
            <person name="Glodek A."/>
            <person name="Scott J.L."/>
            <person name="Geoghagen N.S.M."/>
            <person name="Weidman J.F."/>
            <person name="Fuhrmann J.L."/>
            <person name="Nguyen D."/>
            <person name="Utterback T.R."/>
            <person name="Kelley J.M."/>
            <person name="Peterson J.D."/>
            <person name="Sadow P.W."/>
            <person name="Hanna M.C."/>
            <person name="Cotton M.D."/>
            <person name="Roberts K.M."/>
            <person name="Hurst M.A."/>
            <person name="Kaine B.P."/>
            <person name="Borodovsky M."/>
            <person name="Klenk H.-P."/>
            <person name="Fraser C.M."/>
            <person name="Smith H.O."/>
            <person name="Woese C.R."/>
            <person name="Venter J.C."/>
        </authorList>
    </citation>
    <scope>NUCLEOTIDE SEQUENCE [LARGE SCALE GENOMIC DNA]</scope>
    <source>
        <strain>ATCC 43067 / DSM 2661 / JAL-1 / JCM 10045 / NBRC 100440</strain>
    </source>
</reference>
<name>Y390_METJA</name>
<gene>
    <name type="ordered locus">MJ0390</name>
</gene>
<feature type="chain" id="PRO_0000106851" description="Uncharacterized protein MJ0390">
    <location>
        <begin position="1"/>
        <end position="130"/>
    </location>
</feature>
<organism>
    <name type="scientific">Methanocaldococcus jannaschii (strain ATCC 43067 / DSM 2661 / JAL-1 / JCM 10045 / NBRC 100440)</name>
    <name type="common">Methanococcus jannaschii</name>
    <dbReference type="NCBI Taxonomy" id="243232"/>
    <lineage>
        <taxon>Archaea</taxon>
        <taxon>Methanobacteriati</taxon>
        <taxon>Methanobacteriota</taxon>
        <taxon>Methanomada group</taxon>
        <taxon>Methanococci</taxon>
        <taxon>Methanococcales</taxon>
        <taxon>Methanocaldococcaceae</taxon>
        <taxon>Methanocaldococcus</taxon>
    </lineage>
</organism>
<dbReference type="EMBL" id="L77117">
    <property type="protein sequence ID" value="AAB98381.1"/>
    <property type="molecule type" value="Genomic_DNA"/>
</dbReference>
<dbReference type="PIR" id="F64348">
    <property type="entry name" value="F64348"/>
</dbReference>
<dbReference type="RefSeq" id="WP_010869889.1">
    <property type="nucleotide sequence ID" value="NC_000909.1"/>
</dbReference>
<dbReference type="STRING" id="243232.MJ_0390"/>
<dbReference type="PaxDb" id="243232-MJ_0390"/>
<dbReference type="EnsemblBacteria" id="AAB98381">
    <property type="protein sequence ID" value="AAB98381"/>
    <property type="gene ID" value="MJ_0390"/>
</dbReference>
<dbReference type="GeneID" id="1451247"/>
<dbReference type="KEGG" id="mja:MJ_0390"/>
<dbReference type="eggNOG" id="arCOG08287">
    <property type="taxonomic scope" value="Archaea"/>
</dbReference>
<dbReference type="HOGENOM" id="CLU_2056049_0_0_2"/>
<dbReference type="InParanoid" id="Q57835"/>
<dbReference type="OrthoDB" id="65953at2157"/>
<dbReference type="Proteomes" id="UP000000805">
    <property type="component" value="Chromosome"/>
</dbReference>
<proteinExistence type="predicted"/>
<keyword id="KW-1185">Reference proteome</keyword>